<dbReference type="EMBL" id="AF039832">
    <property type="protein sequence ID" value="AAC70909.1"/>
    <property type="molecule type" value="mRNA"/>
</dbReference>
<dbReference type="EMBL" id="AJ222971">
    <property type="protein sequence ID" value="CAB52283.1"/>
    <property type="molecule type" value="mRNA"/>
</dbReference>
<dbReference type="EMBL" id="AJ222972">
    <property type="protein sequence ID" value="CAB52284.1"/>
    <property type="molecule type" value="mRNA"/>
</dbReference>
<dbReference type="RefSeq" id="NP_001035970.1">
    <molecule id="Q9R0W1-1"/>
    <property type="nucleotide sequence ID" value="NM_001042505.1"/>
</dbReference>
<dbReference type="RefSeq" id="NP_062207.1">
    <molecule id="Q9R0W1-2"/>
    <property type="nucleotide sequence ID" value="NM_019334.2"/>
</dbReference>
<dbReference type="RefSeq" id="XP_017446543.1">
    <property type="nucleotide sequence ID" value="XM_017591054.1"/>
</dbReference>
<dbReference type="SMR" id="Q9R0W1"/>
<dbReference type="FunCoup" id="Q9R0W1">
    <property type="interactions" value="693"/>
</dbReference>
<dbReference type="STRING" id="10116.ENSRNOP00000046259"/>
<dbReference type="GlyGen" id="Q9R0W1">
    <property type="glycosylation" value="2 sites"/>
</dbReference>
<dbReference type="PhosphoSitePlus" id="Q9R0W1"/>
<dbReference type="PaxDb" id="10116-ENSRNOP00000046259"/>
<dbReference type="Ensembl" id="ENSRNOT00000044232.7">
    <molecule id="Q9R0W1-2"/>
    <property type="protein sequence ID" value="ENSRNOP00000043402.3"/>
    <property type="gene ID" value="ENSRNOG00000010681.9"/>
</dbReference>
<dbReference type="Ensembl" id="ENSRNOT00000051009.5">
    <molecule id="Q9R0W1-1"/>
    <property type="protein sequence ID" value="ENSRNOP00000046259.3"/>
    <property type="gene ID" value="ENSRNOG00000010681.9"/>
</dbReference>
<dbReference type="GeneID" id="54284"/>
<dbReference type="KEGG" id="rno:54284"/>
<dbReference type="UCSC" id="RGD:3331">
    <molecule id="Q9R0W1-1"/>
    <property type="organism name" value="rat"/>
</dbReference>
<dbReference type="AGR" id="RGD:3331"/>
<dbReference type="CTD" id="5308"/>
<dbReference type="RGD" id="3331">
    <property type="gene designation" value="Pitx2"/>
</dbReference>
<dbReference type="eggNOG" id="KOG0486">
    <property type="taxonomic scope" value="Eukaryota"/>
</dbReference>
<dbReference type="GeneTree" id="ENSGT00940000154518"/>
<dbReference type="HOGENOM" id="CLU_030301_0_0_1"/>
<dbReference type="InParanoid" id="Q9R0W1"/>
<dbReference type="OMA" id="NSMRNPL"/>
<dbReference type="OrthoDB" id="6159439at2759"/>
<dbReference type="PhylomeDB" id="Q9R0W1"/>
<dbReference type="TreeFam" id="TF351940"/>
<dbReference type="PRO" id="PR:Q9R0W1"/>
<dbReference type="Proteomes" id="UP000002494">
    <property type="component" value="Chromosome 2"/>
</dbReference>
<dbReference type="Bgee" id="ENSRNOG00000010681">
    <property type="expression patterns" value="Expressed in esophagus and 10 other cell types or tissues"/>
</dbReference>
<dbReference type="GO" id="GO:0005737">
    <property type="term" value="C:cytoplasm"/>
    <property type="evidence" value="ECO:0000266"/>
    <property type="project" value="RGD"/>
</dbReference>
<dbReference type="GO" id="GO:0005634">
    <property type="term" value="C:nucleus"/>
    <property type="evidence" value="ECO:0000266"/>
    <property type="project" value="RGD"/>
</dbReference>
<dbReference type="GO" id="GO:0005667">
    <property type="term" value="C:transcription regulator complex"/>
    <property type="evidence" value="ECO:0000266"/>
    <property type="project" value="RGD"/>
</dbReference>
<dbReference type="GO" id="GO:0003682">
    <property type="term" value="F:chromatin binding"/>
    <property type="evidence" value="ECO:0000266"/>
    <property type="project" value="RGD"/>
</dbReference>
<dbReference type="GO" id="GO:0031490">
    <property type="term" value="F:chromatin DNA binding"/>
    <property type="evidence" value="ECO:0000266"/>
    <property type="project" value="RGD"/>
</dbReference>
<dbReference type="GO" id="GO:0001228">
    <property type="term" value="F:DNA-binding transcription activator activity, RNA polymerase II-specific"/>
    <property type="evidence" value="ECO:0000314"/>
    <property type="project" value="RGD"/>
</dbReference>
<dbReference type="GO" id="GO:0003700">
    <property type="term" value="F:DNA-binding transcription factor activity"/>
    <property type="evidence" value="ECO:0000266"/>
    <property type="project" value="RGD"/>
</dbReference>
<dbReference type="GO" id="GO:0000981">
    <property type="term" value="F:DNA-binding transcription factor activity, RNA polymerase II-specific"/>
    <property type="evidence" value="ECO:0000266"/>
    <property type="project" value="RGD"/>
</dbReference>
<dbReference type="GO" id="GO:0000978">
    <property type="term" value="F:RNA polymerase II cis-regulatory region sequence-specific DNA binding"/>
    <property type="evidence" value="ECO:0000314"/>
    <property type="project" value="RGD"/>
</dbReference>
<dbReference type="GO" id="GO:0061629">
    <property type="term" value="F:RNA polymerase II-specific DNA-binding transcription factor binding"/>
    <property type="evidence" value="ECO:0000266"/>
    <property type="project" value="RGD"/>
</dbReference>
<dbReference type="GO" id="GO:0043565">
    <property type="term" value="F:sequence-specific DNA binding"/>
    <property type="evidence" value="ECO:0000266"/>
    <property type="project" value="RGD"/>
</dbReference>
<dbReference type="GO" id="GO:1990837">
    <property type="term" value="F:sequence-specific double-stranded DNA binding"/>
    <property type="evidence" value="ECO:0000266"/>
    <property type="project" value="RGD"/>
</dbReference>
<dbReference type="GO" id="GO:0000976">
    <property type="term" value="F:transcription cis-regulatory region binding"/>
    <property type="evidence" value="ECO:0000266"/>
    <property type="project" value="RGD"/>
</dbReference>
<dbReference type="GO" id="GO:0009653">
    <property type="term" value="P:anatomical structure morphogenesis"/>
    <property type="evidence" value="ECO:0000266"/>
    <property type="project" value="RGD"/>
</dbReference>
<dbReference type="GO" id="GO:0009887">
    <property type="term" value="P:animal organ morphogenesis"/>
    <property type="evidence" value="ECO:0000266"/>
    <property type="project" value="RGD"/>
</dbReference>
<dbReference type="GO" id="GO:0055009">
    <property type="term" value="P:atrial cardiac muscle tissue morphogenesis"/>
    <property type="evidence" value="ECO:0000266"/>
    <property type="project" value="RGD"/>
</dbReference>
<dbReference type="GO" id="GO:0003171">
    <property type="term" value="P:atrioventricular valve development"/>
    <property type="evidence" value="ECO:0000266"/>
    <property type="project" value="RGD"/>
</dbReference>
<dbReference type="GO" id="GO:0001569">
    <property type="term" value="P:branching involved in blood vessel morphogenesis"/>
    <property type="evidence" value="ECO:0000266"/>
    <property type="project" value="RGD"/>
</dbReference>
<dbReference type="GO" id="GO:0043010">
    <property type="term" value="P:camera-type eye development"/>
    <property type="evidence" value="ECO:0000266"/>
    <property type="project" value="RGD"/>
</dbReference>
<dbReference type="GO" id="GO:0055007">
    <property type="term" value="P:cardiac muscle cell differentiation"/>
    <property type="evidence" value="ECO:0000266"/>
    <property type="project" value="RGD"/>
</dbReference>
<dbReference type="GO" id="GO:0048738">
    <property type="term" value="P:cardiac muscle tissue development"/>
    <property type="evidence" value="ECO:0000266"/>
    <property type="project" value="RGD"/>
</dbReference>
<dbReference type="GO" id="GO:0003253">
    <property type="term" value="P:cardiac neural crest cell migration involved in outflow tract morphogenesis"/>
    <property type="evidence" value="ECO:0000266"/>
    <property type="project" value="RGD"/>
</dbReference>
<dbReference type="GO" id="GO:0061325">
    <property type="term" value="P:cell proliferation involved in outflow tract morphogenesis"/>
    <property type="evidence" value="ECO:0000266"/>
    <property type="project" value="RGD"/>
</dbReference>
<dbReference type="GO" id="GO:0035993">
    <property type="term" value="P:deltoid tuberosity development"/>
    <property type="evidence" value="ECO:0000266"/>
    <property type="project" value="RGD"/>
</dbReference>
<dbReference type="GO" id="GO:0007368">
    <property type="term" value="P:determination of left/right symmetry"/>
    <property type="evidence" value="ECO:0000266"/>
    <property type="project" value="RGD"/>
</dbReference>
<dbReference type="GO" id="GO:0055123">
    <property type="term" value="P:digestive system development"/>
    <property type="evidence" value="ECO:0000266"/>
    <property type="project" value="RGD"/>
</dbReference>
<dbReference type="GO" id="GO:0031076">
    <property type="term" value="P:embryonic camera-type eye development"/>
    <property type="evidence" value="ECO:0000266"/>
    <property type="project" value="RGD"/>
</dbReference>
<dbReference type="GO" id="GO:0048557">
    <property type="term" value="P:embryonic digestive tract morphogenesis"/>
    <property type="evidence" value="ECO:0000266"/>
    <property type="project" value="RGD"/>
</dbReference>
<dbReference type="GO" id="GO:0060971">
    <property type="term" value="P:embryonic heart tube left/right pattern formation"/>
    <property type="evidence" value="ECO:0000266"/>
    <property type="project" value="RGD"/>
</dbReference>
<dbReference type="GO" id="GO:0035116">
    <property type="term" value="P:embryonic hindlimb morphogenesis"/>
    <property type="evidence" value="ECO:0000266"/>
    <property type="project" value="RGD"/>
</dbReference>
<dbReference type="GO" id="GO:0061031">
    <property type="term" value="P:endodermal digestive tract morphogenesis"/>
    <property type="evidence" value="ECO:0000266"/>
    <property type="project" value="RGD"/>
</dbReference>
<dbReference type="GO" id="GO:0002074">
    <property type="term" value="P:extraocular skeletal muscle development"/>
    <property type="evidence" value="ECO:0000266"/>
    <property type="project" value="RGD"/>
</dbReference>
<dbReference type="GO" id="GO:0008585">
    <property type="term" value="P:female gonad development"/>
    <property type="evidence" value="ECO:0000270"/>
    <property type="project" value="RGD"/>
</dbReference>
<dbReference type="GO" id="GO:0007507">
    <property type="term" value="P:heart development"/>
    <property type="evidence" value="ECO:0000266"/>
    <property type="project" value="RGD"/>
</dbReference>
<dbReference type="GO" id="GO:0021855">
    <property type="term" value="P:hypothalamus cell migration"/>
    <property type="evidence" value="ECO:0000266"/>
    <property type="project" value="RGD"/>
</dbReference>
<dbReference type="GO" id="GO:0001701">
    <property type="term" value="P:in utero embryonic development"/>
    <property type="evidence" value="ECO:0000266"/>
    <property type="project" value="RGD"/>
</dbReference>
<dbReference type="GO" id="GO:0061072">
    <property type="term" value="P:iris morphogenesis"/>
    <property type="evidence" value="ECO:0000266"/>
    <property type="project" value="RGD"/>
</dbReference>
<dbReference type="GO" id="GO:0060460">
    <property type="term" value="P:left lung morphogenesis"/>
    <property type="evidence" value="ECO:0000266"/>
    <property type="project" value="RGD"/>
</dbReference>
<dbReference type="GO" id="GO:0070986">
    <property type="term" value="P:left/right axis specification"/>
    <property type="evidence" value="ECO:0000266"/>
    <property type="project" value="RGD"/>
</dbReference>
<dbReference type="GO" id="GO:0030324">
    <property type="term" value="P:lung development"/>
    <property type="evidence" value="ECO:0000266"/>
    <property type="project" value="RGD"/>
</dbReference>
<dbReference type="GO" id="GO:0008584">
    <property type="term" value="P:male gonad development"/>
    <property type="evidence" value="ECO:0000270"/>
    <property type="project" value="RGD"/>
</dbReference>
<dbReference type="GO" id="GO:0030182">
    <property type="term" value="P:neuron differentiation"/>
    <property type="evidence" value="ECO:0000270"/>
    <property type="project" value="RGD"/>
</dbReference>
<dbReference type="GO" id="GO:0001764">
    <property type="term" value="P:neuron migration"/>
    <property type="evidence" value="ECO:0000266"/>
    <property type="project" value="RGD"/>
</dbReference>
<dbReference type="GO" id="GO:0042476">
    <property type="term" value="P:odontogenesis"/>
    <property type="evidence" value="ECO:0000266"/>
    <property type="project" value="RGD"/>
</dbReference>
<dbReference type="GO" id="GO:0042475">
    <property type="term" value="P:odontogenesis of dentin-containing tooth"/>
    <property type="evidence" value="ECO:0000270"/>
    <property type="project" value="RGD"/>
</dbReference>
<dbReference type="GO" id="GO:0003151">
    <property type="term" value="P:outflow tract morphogenesis"/>
    <property type="evidence" value="ECO:0000266"/>
    <property type="project" value="RGD"/>
</dbReference>
<dbReference type="GO" id="GO:0021983">
    <property type="term" value="P:pituitary gland development"/>
    <property type="evidence" value="ECO:0000266"/>
    <property type="project" value="RGD"/>
</dbReference>
<dbReference type="GO" id="GO:0008284">
    <property type="term" value="P:positive regulation of cell population proliferation"/>
    <property type="evidence" value="ECO:0000266"/>
    <property type="project" value="RGD"/>
</dbReference>
<dbReference type="GO" id="GO:0045893">
    <property type="term" value="P:positive regulation of DNA-templated transcription"/>
    <property type="evidence" value="ECO:0000266"/>
    <property type="project" value="RGD"/>
</dbReference>
<dbReference type="GO" id="GO:0045944">
    <property type="term" value="P:positive regulation of transcription by RNA polymerase II"/>
    <property type="evidence" value="ECO:0000314"/>
    <property type="project" value="RGD"/>
</dbReference>
<dbReference type="GO" id="GO:0003350">
    <property type="term" value="P:pulmonary myocardium development"/>
    <property type="evidence" value="ECO:0000266"/>
    <property type="project" value="RGD"/>
</dbReference>
<dbReference type="GO" id="GO:0060577">
    <property type="term" value="P:pulmonary vein morphogenesis"/>
    <property type="evidence" value="ECO:0000266"/>
    <property type="project" value="RGD"/>
</dbReference>
<dbReference type="GO" id="GO:0030334">
    <property type="term" value="P:regulation of cell migration"/>
    <property type="evidence" value="ECO:0000266"/>
    <property type="project" value="RGD"/>
</dbReference>
<dbReference type="GO" id="GO:0042127">
    <property type="term" value="P:regulation of cell population proliferation"/>
    <property type="evidence" value="ECO:0000266"/>
    <property type="project" value="RGD"/>
</dbReference>
<dbReference type="GO" id="GO:0006357">
    <property type="term" value="P:regulation of transcription by RNA polymerase II"/>
    <property type="evidence" value="ECO:0000266"/>
    <property type="project" value="RGD"/>
</dbReference>
<dbReference type="GO" id="GO:0009725">
    <property type="term" value="P:response to hormone"/>
    <property type="evidence" value="ECO:0000270"/>
    <property type="project" value="RGD"/>
</dbReference>
<dbReference type="GO" id="GO:0033189">
    <property type="term" value="P:response to vitamin A"/>
    <property type="evidence" value="ECO:0000270"/>
    <property type="project" value="RGD"/>
</dbReference>
<dbReference type="GO" id="GO:0007519">
    <property type="term" value="P:skeletal muscle tissue development"/>
    <property type="evidence" value="ECO:0000266"/>
    <property type="project" value="RGD"/>
</dbReference>
<dbReference type="GO" id="GO:0048536">
    <property type="term" value="P:spleen development"/>
    <property type="evidence" value="ECO:0000266"/>
    <property type="project" value="RGD"/>
</dbReference>
<dbReference type="GO" id="GO:0021763">
    <property type="term" value="P:subthalamic nucleus development"/>
    <property type="evidence" value="ECO:0000266"/>
    <property type="project" value="RGD"/>
</dbReference>
<dbReference type="GO" id="GO:0060578">
    <property type="term" value="P:superior vena cava morphogenesis"/>
    <property type="evidence" value="ECO:0000266"/>
    <property type="project" value="RGD"/>
</dbReference>
<dbReference type="GO" id="GO:0035886">
    <property type="term" value="P:vascular associated smooth muscle cell differentiation"/>
    <property type="evidence" value="ECO:0000266"/>
    <property type="project" value="RGD"/>
</dbReference>
<dbReference type="GO" id="GO:0001570">
    <property type="term" value="P:vasculogenesis"/>
    <property type="evidence" value="ECO:0000266"/>
    <property type="project" value="RGD"/>
</dbReference>
<dbReference type="GO" id="GO:0055015">
    <property type="term" value="P:ventricular cardiac muscle cell development"/>
    <property type="evidence" value="ECO:0000266"/>
    <property type="project" value="RGD"/>
</dbReference>
<dbReference type="GO" id="GO:0060412">
    <property type="term" value="P:ventricular septum morphogenesis"/>
    <property type="evidence" value="ECO:0000266"/>
    <property type="project" value="RGD"/>
</dbReference>
<dbReference type="GO" id="GO:0016055">
    <property type="term" value="P:Wnt signaling pathway"/>
    <property type="evidence" value="ECO:0000266"/>
    <property type="project" value="RGD"/>
</dbReference>
<dbReference type="CDD" id="cd00086">
    <property type="entry name" value="homeodomain"/>
    <property type="match status" value="1"/>
</dbReference>
<dbReference type="FunFam" id="1.10.10.60:FF:000031">
    <property type="entry name" value="Homeobox protein"/>
    <property type="match status" value="1"/>
</dbReference>
<dbReference type="Gene3D" id="1.10.10.60">
    <property type="entry name" value="Homeodomain-like"/>
    <property type="match status" value="1"/>
</dbReference>
<dbReference type="InterPro" id="IPR001356">
    <property type="entry name" value="HD"/>
</dbReference>
<dbReference type="InterPro" id="IPR017970">
    <property type="entry name" value="Homeobox_CS"/>
</dbReference>
<dbReference type="InterPro" id="IPR016233">
    <property type="entry name" value="Homeobox_Pitx/unc30"/>
</dbReference>
<dbReference type="InterPro" id="IPR009057">
    <property type="entry name" value="Homeodomain-like_sf"/>
</dbReference>
<dbReference type="InterPro" id="IPR003654">
    <property type="entry name" value="OAR_dom"/>
</dbReference>
<dbReference type="PANTHER" id="PTHR45882:SF4">
    <property type="entry name" value="PITUITARY HOMEOBOX 2"/>
    <property type="match status" value="1"/>
</dbReference>
<dbReference type="PANTHER" id="PTHR45882">
    <property type="entry name" value="PITUITARY HOMEOBOX HOMOLOG PTX1"/>
    <property type="match status" value="1"/>
</dbReference>
<dbReference type="Pfam" id="PF00046">
    <property type="entry name" value="Homeodomain"/>
    <property type="match status" value="1"/>
</dbReference>
<dbReference type="Pfam" id="PF03826">
    <property type="entry name" value="OAR"/>
    <property type="match status" value="1"/>
</dbReference>
<dbReference type="PIRSF" id="PIRSF000563">
    <property type="entry name" value="Homeobox_protein_Pitx/Unc30"/>
    <property type="match status" value="1"/>
</dbReference>
<dbReference type="SMART" id="SM00389">
    <property type="entry name" value="HOX"/>
    <property type="match status" value="1"/>
</dbReference>
<dbReference type="SUPFAM" id="SSF46689">
    <property type="entry name" value="Homeodomain-like"/>
    <property type="match status" value="1"/>
</dbReference>
<dbReference type="PROSITE" id="PS00027">
    <property type="entry name" value="HOMEOBOX_1"/>
    <property type="match status" value="1"/>
</dbReference>
<dbReference type="PROSITE" id="PS50071">
    <property type="entry name" value="HOMEOBOX_2"/>
    <property type="match status" value="1"/>
</dbReference>
<dbReference type="PROSITE" id="PS50803">
    <property type="entry name" value="OAR"/>
    <property type="match status" value="1"/>
</dbReference>
<name>PITX2_RAT</name>
<organism>
    <name type="scientific">Rattus norvegicus</name>
    <name type="common">Rat</name>
    <dbReference type="NCBI Taxonomy" id="10116"/>
    <lineage>
        <taxon>Eukaryota</taxon>
        <taxon>Metazoa</taxon>
        <taxon>Chordata</taxon>
        <taxon>Craniata</taxon>
        <taxon>Vertebrata</taxon>
        <taxon>Euteleostomi</taxon>
        <taxon>Mammalia</taxon>
        <taxon>Eutheria</taxon>
        <taxon>Euarchontoglires</taxon>
        <taxon>Glires</taxon>
        <taxon>Rodentia</taxon>
        <taxon>Myomorpha</taxon>
        <taxon>Muroidea</taxon>
        <taxon>Muridae</taxon>
        <taxon>Murinae</taxon>
        <taxon>Rattus</taxon>
    </lineage>
</organism>
<accession>Q9R0W1</accession>
<feature type="chain" id="PRO_0000049225" description="Pituitary homeobox 2">
    <location>
        <begin position="1"/>
        <end position="324"/>
    </location>
</feature>
<feature type="DNA-binding region" description="Homeobox" evidence="5">
    <location>
        <begin position="92"/>
        <end position="151"/>
    </location>
</feature>
<feature type="region of interest" description="Disordered" evidence="7">
    <location>
        <begin position="57"/>
        <end position="111"/>
    </location>
</feature>
<feature type="short sequence motif" description="OAR" evidence="6">
    <location>
        <begin position="286"/>
        <end position="299"/>
    </location>
</feature>
<feature type="short sequence motif" description="Nuclear localization signal" evidence="4">
    <location>
        <begin position="292"/>
        <end position="296"/>
    </location>
</feature>
<feature type="compositionally biased region" description="Basic and acidic residues" evidence="7">
    <location>
        <begin position="67"/>
        <end position="80"/>
    </location>
</feature>
<feature type="compositionally biased region" description="Basic residues" evidence="7">
    <location>
        <begin position="88"/>
        <end position="97"/>
    </location>
</feature>
<feature type="modified residue" description="Phosphothreonine; by PKB/AKT2" evidence="1">
    <location>
        <position position="97"/>
    </location>
</feature>
<feature type="splice variant" id="VSP_002264" description="In isoform PTX2B." evidence="8 9">
    <location>
        <begin position="1"/>
        <end position="53"/>
    </location>
</feature>
<feature type="splice variant" id="VSP_002265" description="In isoform PTX2B." evidence="8 9">
    <original>LEVHTISDTSSPEVA</original>
    <variation>METNCRKLVSACVQL</variation>
    <location>
        <begin position="54"/>
        <end position="68"/>
    </location>
</feature>
<protein>
    <recommendedName>
        <fullName evidence="10">Pituitary homeobox 2</fullName>
    </recommendedName>
    <alternativeName>
        <fullName>Homeobox protein PITX2</fullName>
    </alternativeName>
    <alternativeName>
        <fullName>Paired-like homeodomain transcription factor 2</fullName>
    </alternativeName>
    <alternativeName>
        <fullName>rPtx2</fullName>
    </alternativeName>
</protein>
<proteinExistence type="evidence at transcript level"/>
<sequence>MNCMKGPLPLEHRAAGTKLSAASSPFCHHTQALAMASVLAPGQPRSLDASKHRLEVHTISDTSSPEVAEKDKGQQGKNEDVGAEDPSKKKRQRRQRTHFTSQQLQELEATFQRNRYPDMSTREEIAVWTNLTEARVRVWFKNRRAKWRKRERNQQAELCKNGFGPQFNGLMQPYDDMYPGYSYNNWAAKGLTSASLSTKSFPFFNSMNVNPLSSQSMFSPPNSISSMSMSSSMVPSAVTGVPGSSLNSLNNLNNLSSPSLNSAVPTPACPYAPPTPPYVYRDTCNSSLASLRLKAKQHSSFGYASVQNPASNLSACQYAVDRPV</sequence>
<comment type="function">
    <text evidence="2">May play a role in myoblast differentiation. When unphosphorylated, associates with an ELAVL1-containing complex, which stabilizes cyclin mRNA and ensuring cell proliferation. Phosphorylation by AKT2 impairs this association, leading to CCND1 mRNA destabilization and progression towards differentiation. Involved in the establishment of left-right asymmetry in the developing embryo.</text>
</comment>
<comment type="subunit">
    <text evidence="2 3">Interacts with EFEMP2 (By similarity). Interacts (when unphosphorylated on Thr-97) with ELAVL1/HUR (By similarity).</text>
</comment>
<comment type="subcellular location">
    <subcellularLocation>
        <location evidence="10">Nucleus</location>
    </subcellularLocation>
    <subcellularLocation>
        <location evidence="2">Cytoplasm</location>
    </subcellularLocation>
</comment>
<comment type="alternative products">
    <event type="alternative splicing"/>
    <isoform>
        <id>Q9R0W1-1</id>
        <name>PTX2A</name>
        <sequence type="displayed"/>
    </isoform>
    <isoform>
        <id>Q9R0W1-2</id>
        <name>PTX2B</name>
        <sequence type="described" ref="VSP_002264 VSP_002265"/>
    </isoform>
</comment>
<comment type="tissue specificity">
    <text>Expressed in the brain.</text>
</comment>
<comment type="PTM">
    <text evidence="2">Phosphorylated at Thr-97 by AKT2, but not AKT1. Phosphorylation at Thr-97 impairs its association with a CCND1 mRNA-stabilizing complex, thus shortening the half-life of CCND1.</text>
</comment>
<comment type="similarity">
    <text evidence="10">Belongs to the paired homeobox family. Bicoid subfamily.</text>
</comment>
<gene>
    <name evidence="11" type="primary">Pitx2</name>
    <name type="synonym">Ptx2</name>
</gene>
<keyword id="KW-0025">Alternative splicing</keyword>
<keyword id="KW-0963">Cytoplasm</keyword>
<keyword id="KW-0217">Developmental protein</keyword>
<keyword id="KW-0238">DNA-binding</keyword>
<keyword id="KW-0371">Homeobox</keyword>
<keyword id="KW-0539">Nucleus</keyword>
<keyword id="KW-0597">Phosphoprotein</keyword>
<keyword id="KW-1185">Reference proteome</keyword>
<reference key="1">
    <citation type="journal article" date="1998" name="Brain Res. Dev. Brain Res.">
        <title>Regulated expression of the homeobox gene, rPtx2, in the developing rat.</title>
        <authorList>
            <person name="Lindberg C."/>
            <person name="Wunderlich M."/>
            <person name="Ratliff J."/>
            <person name="Dinsmore J."/>
            <person name="Jacoby D.B."/>
        </authorList>
    </citation>
    <scope>NUCLEOTIDE SEQUENCE [MRNA] (ISOFORM PTX2B)</scope>
    <source>
        <strain>Sprague-Dawley</strain>
    </source>
</reference>
<reference key="2">
    <citation type="journal article" date="2000" name="J. Neurochem.">
        <title>Analysis of three Ptx2 splice variants on transcriptional activity and differential expression pattern in the brain.</title>
        <authorList>
            <person name="Smidt M.P."/>
            <person name="Cox J.J."/>
            <person name="van Schaick H.S.A."/>
            <person name="Coolen M."/>
            <person name="Schepers J."/>
            <person name="van der Kleij A.M."/>
            <person name="Burbach J.P.H."/>
        </authorList>
    </citation>
    <scope>NUCLEOTIDE SEQUENCE [MRNA] (ISOFORMS PTX2A AND PTX2B)</scope>
</reference>
<evidence type="ECO:0000250" key="1"/>
<evidence type="ECO:0000250" key="2">
    <source>
        <dbReference type="UniProtKB" id="P97474"/>
    </source>
</evidence>
<evidence type="ECO:0000250" key="3">
    <source>
        <dbReference type="UniProtKB" id="Q99697"/>
    </source>
</evidence>
<evidence type="ECO:0000255" key="4"/>
<evidence type="ECO:0000255" key="5">
    <source>
        <dbReference type="PROSITE-ProRule" id="PRU00108"/>
    </source>
</evidence>
<evidence type="ECO:0000255" key="6">
    <source>
        <dbReference type="PROSITE-ProRule" id="PRU00138"/>
    </source>
</evidence>
<evidence type="ECO:0000256" key="7">
    <source>
        <dbReference type="SAM" id="MobiDB-lite"/>
    </source>
</evidence>
<evidence type="ECO:0000303" key="8">
    <source>
    </source>
</evidence>
<evidence type="ECO:0000303" key="9">
    <source>
    </source>
</evidence>
<evidence type="ECO:0000305" key="10"/>
<evidence type="ECO:0000312" key="11">
    <source>
        <dbReference type="RGD" id="3331"/>
    </source>
</evidence>